<proteinExistence type="inferred from homology"/>
<accession>Q6FYP6</accession>
<reference key="1">
    <citation type="journal article" date="2004" name="Proc. Natl. Acad. Sci. U.S.A.">
        <title>The louse-borne human pathogen Bartonella quintana is a genomic derivative of the zoonotic agent Bartonella henselae.</title>
        <authorList>
            <person name="Alsmark U.C.M."/>
            <person name="Frank A.C."/>
            <person name="Karlberg E.O."/>
            <person name="Legault B.-A."/>
            <person name="Ardell D.H."/>
            <person name="Canbaeck B."/>
            <person name="Eriksson A.-S."/>
            <person name="Naeslund A.K."/>
            <person name="Handley S.A."/>
            <person name="Huvet M."/>
            <person name="La Scola B."/>
            <person name="Holmberg M."/>
            <person name="Andersson S.G.E."/>
        </authorList>
    </citation>
    <scope>NUCLEOTIDE SEQUENCE [LARGE SCALE GENOMIC DNA]</scope>
    <source>
        <strain>Toulouse</strain>
    </source>
</reference>
<sequence>MKDQRLLDSVPLPNDPDRSLRPQVLDDFIGQEAARANLKIFIEAAKARQEALDHVLFVGPPGLGKTTLSQIMAKELGVNFRSTSGPVIAKSGDLAALLTNLEERDVLFIDEIHRLNPAIEEILYPAMEDYQLDLILGEGPAARSVKIDLAKFTLVAATTRLGLLTTPLRDRFGIPIRLNFYTIEELEYIVQRNARLFSVQISDDGAHEIARRARGTPRIAGRLLRRVCDFALVKRAKKIDRKVADEALSRLEVDHLGLDPLDRRYLLLIAETFLGGPVGIETIAAALSEPRDAIEDIIEPYLLQQGFIQRTARGRILREKAWNHLGLCAPASTISTQKCAQLLNTQDNSSGQTTLWDEADE</sequence>
<organism>
    <name type="scientific">Bartonella quintana (strain Toulouse)</name>
    <name type="common">Rochalimaea quintana</name>
    <dbReference type="NCBI Taxonomy" id="283165"/>
    <lineage>
        <taxon>Bacteria</taxon>
        <taxon>Pseudomonadati</taxon>
        <taxon>Pseudomonadota</taxon>
        <taxon>Alphaproteobacteria</taxon>
        <taxon>Hyphomicrobiales</taxon>
        <taxon>Bartonellaceae</taxon>
        <taxon>Bartonella</taxon>
    </lineage>
</organism>
<feature type="chain" id="PRO_0000165496" description="Holliday junction branch migration complex subunit RuvB">
    <location>
        <begin position="1"/>
        <end position="361"/>
    </location>
</feature>
<feature type="region of interest" description="Large ATPase domain (RuvB-L)" evidence="1">
    <location>
        <begin position="1"/>
        <end position="181"/>
    </location>
</feature>
<feature type="region of interest" description="Small ATPAse domain (RuvB-S)" evidence="1">
    <location>
        <begin position="182"/>
        <end position="252"/>
    </location>
</feature>
<feature type="region of interest" description="Head domain (RuvB-H)" evidence="1">
    <location>
        <begin position="255"/>
        <end position="361"/>
    </location>
</feature>
<feature type="binding site" evidence="1">
    <location>
        <position position="20"/>
    </location>
    <ligand>
        <name>ATP</name>
        <dbReference type="ChEBI" id="CHEBI:30616"/>
    </ligand>
</feature>
<feature type="binding site" evidence="1">
    <location>
        <position position="21"/>
    </location>
    <ligand>
        <name>ATP</name>
        <dbReference type="ChEBI" id="CHEBI:30616"/>
    </ligand>
</feature>
<feature type="binding site" evidence="1">
    <location>
        <position position="62"/>
    </location>
    <ligand>
        <name>ATP</name>
        <dbReference type="ChEBI" id="CHEBI:30616"/>
    </ligand>
</feature>
<feature type="binding site" evidence="1">
    <location>
        <position position="65"/>
    </location>
    <ligand>
        <name>ATP</name>
        <dbReference type="ChEBI" id="CHEBI:30616"/>
    </ligand>
</feature>
<feature type="binding site" evidence="1">
    <location>
        <position position="66"/>
    </location>
    <ligand>
        <name>ATP</name>
        <dbReference type="ChEBI" id="CHEBI:30616"/>
    </ligand>
</feature>
<feature type="binding site" evidence="1">
    <location>
        <position position="66"/>
    </location>
    <ligand>
        <name>Mg(2+)</name>
        <dbReference type="ChEBI" id="CHEBI:18420"/>
    </ligand>
</feature>
<feature type="binding site" evidence="1">
    <location>
        <position position="67"/>
    </location>
    <ligand>
        <name>ATP</name>
        <dbReference type="ChEBI" id="CHEBI:30616"/>
    </ligand>
</feature>
<feature type="binding site" evidence="1">
    <location>
        <begin position="128"/>
        <end position="130"/>
    </location>
    <ligand>
        <name>ATP</name>
        <dbReference type="ChEBI" id="CHEBI:30616"/>
    </ligand>
</feature>
<feature type="binding site" evidence="1">
    <location>
        <position position="171"/>
    </location>
    <ligand>
        <name>ATP</name>
        <dbReference type="ChEBI" id="CHEBI:30616"/>
    </ligand>
</feature>
<feature type="binding site" evidence="1">
    <location>
        <position position="181"/>
    </location>
    <ligand>
        <name>ATP</name>
        <dbReference type="ChEBI" id="CHEBI:30616"/>
    </ligand>
</feature>
<feature type="binding site" evidence="1">
    <location>
        <position position="218"/>
    </location>
    <ligand>
        <name>ATP</name>
        <dbReference type="ChEBI" id="CHEBI:30616"/>
    </ligand>
</feature>
<feature type="binding site" evidence="1">
    <location>
        <position position="291"/>
    </location>
    <ligand>
        <name>DNA</name>
        <dbReference type="ChEBI" id="CHEBI:16991"/>
    </ligand>
</feature>
<feature type="binding site" evidence="1">
    <location>
        <position position="310"/>
    </location>
    <ligand>
        <name>DNA</name>
        <dbReference type="ChEBI" id="CHEBI:16991"/>
    </ligand>
</feature>
<feature type="binding site" evidence="1">
    <location>
        <position position="315"/>
    </location>
    <ligand>
        <name>DNA</name>
        <dbReference type="ChEBI" id="CHEBI:16991"/>
    </ligand>
</feature>
<protein>
    <recommendedName>
        <fullName evidence="1">Holliday junction branch migration complex subunit RuvB</fullName>
        <ecNumber evidence="1">3.6.4.-</ecNumber>
    </recommendedName>
</protein>
<name>RUVB_BARQU</name>
<evidence type="ECO:0000255" key="1">
    <source>
        <dbReference type="HAMAP-Rule" id="MF_00016"/>
    </source>
</evidence>
<keyword id="KW-0067">ATP-binding</keyword>
<keyword id="KW-0963">Cytoplasm</keyword>
<keyword id="KW-0227">DNA damage</keyword>
<keyword id="KW-0233">DNA recombination</keyword>
<keyword id="KW-0234">DNA repair</keyword>
<keyword id="KW-0238">DNA-binding</keyword>
<keyword id="KW-0378">Hydrolase</keyword>
<keyword id="KW-0547">Nucleotide-binding</keyword>
<comment type="function">
    <text evidence="1">The RuvA-RuvB-RuvC complex processes Holliday junction (HJ) DNA during genetic recombination and DNA repair, while the RuvA-RuvB complex plays an important role in the rescue of blocked DNA replication forks via replication fork reversal (RFR). RuvA specifically binds to HJ cruciform DNA, conferring on it an open structure. The RuvB hexamer acts as an ATP-dependent pump, pulling dsDNA into and through the RuvAB complex. RuvB forms 2 homohexamers on either side of HJ DNA bound by 1 or 2 RuvA tetramers; 4 subunits per hexamer contact DNA at a time. Coordinated motions by a converter formed by DNA-disengaged RuvB subunits stimulates ATP hydrolysis and nucleotide exchange. Immobilization of the converter enables RuvB to convert the ATP-contained energy into a lever motion, pulling 2 nucleotides of DNA out of the RuvA tetramer per ATP hydrolyzed, thus driving DNA branch migration. The RuvB motors rotate together with the DNA substrate, which together with the progressing nucleotide cycle form the mechanistic basis for DNA recombination by continuous HJ branch migration. Branch migration allows RuvC to scan DNA until it finds its consensus sequence, where it cleaves and resolves cruciform DNA.</text>
</comment>
<comment type="catalytic activity">
    <reaction evidence="1">
        <text>ATP + H2O = ADP + phosphate + H(+)</text>
        <dbReference type="Rhea" id="RHEA:13065"/>
        <dbReference type="ChEBI" id="CHEBI:15377"/>
        <dbReference type="ChEBI" id="CHEBI:15378"/>
        <dbReference type="ChEBI" id="CHEBI:30616"/>
        <dbReference type="ChEBI" id="CHEBI:43474"/>
        <dbReference type="ChEBI" id="CHEBI:456216"/>
    </reaction>
</comment>
<comment type="subunit">
    <text evidence="1">Homohexamer. Forms an RuvA(8)-RuvB(12)-Holliday junction (HJ) complex. HJ DNA is sandwiched between 2 RuvA tetramers; dsDNA enters through RuvA and exits via RuvB. An RuvB hexamer assembles on each DNA strand where it exits the tetramer. Each RuvB hexamer is contacted by two RuvA subunits (via domain III) on 2 adjacent RuvB subunits; this complex drives branch migration. In the full resolvosome a probable DNA-RuvA(4)-RuvB(12)-RuvC(2) complex forms which resolves the HJ.</text>
</comment>
<comment type="subcellular location">
    <subcellularLocation>
        <location evidence="1">Cytoplasm</location>
    </subcellularLocation>
</comment>
<comment type="domain">
    <text evidence="1">Has 3 domains, the large (RuvB-L) and small ATPase (RuvB-S) domains and the C-terminal head (RuvB-H) domain. The head domain binds DNA, while the ATPase domains jointly bind ATP, ADP or are empty depending on the state of the subunit in the translocation cycle. During a single DNA translocation step the structure of each domain remains the same, but their relative positions change.</text>
</comment>
<comment type="similarity">
    <text evidence="1">Belongs to the RuvB family.</text>
</comment>
<dbReference type="EC" id="3.6.4.-" evidence="1"/>
<dbReference type="EMBL" id="BX897700">
    <property type="protein sequence ID" value="CAF26646.1"/>
    <property type="molecule type" value="Genomic_DNA"/>
</dbReference>
<dbReference type="RefSeq" id="WP_011179819.1">
    <property type="nucleotide sequence ID" value="NC_005955.1"/>
</dbReference>
<dbReference type="SMR" id="Q6FYP6"/>
<dbReference type="KEGG" id="bqu:BQ11870"/>
<dbReference type="eggNOG" id="COG2255">
    <property type="taxonomic scope" value="Bacteria"/>
</dbReference>
<dbReference type="HOGENOM" id="CLU_055599_1_0_5"/>
<dbReference type="OrthoDB" id="9804478at2"/>
<dbReference type="Proteomes" id="UP000000597">
    <property type="component" value="Chromosome"/>
</dbReference>
<dbReference type="GO" id="GO:0005737">
    <property type="term" value="C:cytoplasm"/>
    <property type="evidence" value="ECO:0007669"/>
    <property type="project" value="UniProtKB-SubCell"/>
</dbReference>
<dbReference type="GO" id="GO:0048476">
    <property type="term" value="C:Holliday junction resolvase complex"/>
    <property type="evidence" value="ECO:0007669"/>
    <property type="project" value="UniProtKB-UniRule"/>
</dbReference>
<dbReference type="GO" id="GO:0005524">
    <property type="term" value="F:ATP binding"/>
    <property type="evidence" value="ECO:0007669"/>
    <property type="project" value="UniProtKB-UniRule"/>
</dbReference>
<dbReference type="GO" id="GO:0016887">
    <property type="term" value="F:ATP hydrolysis activity"/>
    <property type="evidence" value="ECO:0007669"/>
    <property type="project" value="InterPro"/>
</dbReference>
<dbReference type="GO" id="GO:0000400">
    <property type="term" value="F:four-way junction DNA binding"/>
    <property type="evidence" value="ECO:0007669"/>
    <property type="project" value="UniProtKB-UniRule"/>
</dbReference>
<dbReference type="GO" id="GO:0009378">
    <property type="term" value="F:four-way junction helicase activity"/>
    <property type="evidence" value="ECO:0007669"/>
    <property type="project" value="InterPro"/>
</dbReference>
<dbReference type="GO" id="GO:0006310">
    <property type="term" value="P:DNA recombination"/>
    <property type="evidence" value="ECO:0007669"/>
    <property type="project" value="UniProtKB-UniRule"/>
</dbReference>
<dbReference type="GO" id="GO:0006281">
    <property type="term" value="P:DNA repair"/>
    <property type="evidence" value="ECO:0007669"/>
    <property type="project" value="UniProtKB-UniRule"/>
</dbReference>
<dbReference type="CDD" id="cd00009">
    <property type="entry name" value="AAA"/>
    <property type="match status" value="1"/>
</dbReference>
<dbReference type="Gene3D" id="1.10.8.60">
    <property type="match status" value="1"/>
</dbReference>
<dbReference type="Gene3D" id="3.40.50.300">
    <property type="entry name" value="P-loop containing nucleotide triphosphate hydrolases"/>
    <property type="match status" value="1"/>
</dbReference>
<dbReference type="Gene3D" id="1.10.10.10">
    <property type="entry name" value="Winged helix-like DNA-binding domain superfamily/Winged helix DNA-binding domain"/>
    <property type="match status" value="1"/>
</dbReference>
<dbReference type="HAMAP" id="MF_00016">
    <property type="entry name" value="DNA_HJ_migration_RuvB"/>
    <property type="match status" value="1"/>
</dbReference>
<dbReference type="InterPro" id="IPR003593">
    <property type="entry name" value="AAA+_ATPase"/>
</dbReference>
<dbReference type="InterPro" id="IPR041445">
    <property type="entry name" value="AAA_lid_4"/>
</dbReference>
<dbReference type="InterPro" id="IPR004605">
    <property type="entry name" value="DNA_helicase_Holl-junc_RuvB"/>
</dbReference>
<dbReference type="InterPro" id="IPR027417">
    <property type="entry name" value="P-loop_NTPase"/>
</dbReference>
<dbReference type="InterPro" id="IPR008824">
    <property type="entry name" value="RuvB-like_N"/>
</dbReference>
<dbReference type="InterPro" id="IPR008823">
    <property type="entry name" value="RuvB_C"/>
</dbReference>
<dbReference type="InterPro" id="IPR036388">
    <property type="entry name" value="WH-like_DNA-bd_sf"/>
</dbReference>
<dbReference type="InterPro" id="IPR036390">
    <property type="entry name" value="WH_DNA-bd_sf"/>
</dbReference>
<dbReference type="NCBIfam" id="NF000868">
    <property type="entry name" value="PRK00080.1"/>
    <property type="match status" value="1"/>
</dbReference>
<dbReference type="NCBIfam" id="TIGR00635">
    <property type="entry name" value="ruvB"/>
    <property type="match status" value="1"/>
</dbReference>
<dbReference type="PANTHER" id="PTHR42848">
    <property type="match status" value="1"/>
</dbReference>
<dbReference type="PANTHER" id="PTHR42848:SF1">
    <property type="entry name" value="HOLLIDAY JUNCTION BRANCH MIGRATION COMPLEX SUBUNIT RUVB"/>
    <property type="match status" value="1"/>
</dbReference>
<dbReference type="Pfam" id="PF17864">
    <property type="entry name" value="AAA_lid_4"/>
    <property type="match status" value="1"/>
</dbReference>
<dbReference type="Pfam" id="PF05491">
    <property type="entry name" value="RuvB_C"/>
    <property type="match status" value="1"/>
</dbReference>
<dbReference type="Pfam" id="PF05496">
    <property type="entry name" value="RuvB_N"/>
    <property type="match status" value="1"/>
</dbReference>
<dbReference type="SMART" id="SM00382">
    <property type="entry name" value="AAA"/>
    <property type="match status" value="1"/>
</dbReference>
<dbReference type="SUPFAM" id="SSF52540">
    <property type="entry name" value="P-loop containing nucleoside triphosphate hydrolases"/>
    <property type="match status" value="1"/>
</dbReference>
<dbReference type="SUPFAM" id="SSF46785">
    <property type="entry name" value="Winged helix' DNA-binding domain"/>
    <property type="match status" value="1"/>
</dbReference>
<gene>
    <name evidence="1" type="primary">ruvB</name>
    <name type="ordered locus">BQ11870</name>
</gene>